<gene>
    <name evidence="1" type="primary">ubiC</name>
    <name type="ordered locus">ECED1_4754</name>
</gene>
<comment type="function">
    <text evidence="1">Removes the pyruvyl group from chorismate, with concomitant aromatization of the ring, to provide 4-hydroxybenzoate (4HB) for the ubiquinone pathway.</text>
</comment>
<comment type="catalytic activity">
    <reaction evidence="1">
        <text>chorismate = 4-hydroxybenzoate + pyruvate</text>
        <dbReference type="Rhea" id="RHEA:16505"/>
        <dbReference type="ChEBI" id="CHEBI:15361"/>
        <dbReference type="ChEBI" id="CHEBI:17879"/>
        <dbReference type="ChEBI" id="CHEBI:29748"/>
        <dbReference type="EC" id="4.1.3.40"/>
    </reaction>
</comment>
<comment type="pathway">
    <text evidence="1">Cofactor biosynthesis; ubiquinone biosynthesis.</text>
</comment>
<comment type="subunit">
    <text evidence="1">Monomer.</text>
</comment>
<comment type="subcellular location">
    <subcellularLocation>
        <location evidence="1">Cytoplasm</location>
    </subcellularLocation>
</comment>
<comment type="similarity">
    <text evidence="1">Belongs to the UbiC family.</text>
</comment>
<accession>B7N2P6</accession>
<feature type="chain" id="PRO_1000186522" description="Chorismate pyruvate-lyase">
    <location>
        <begin position="1"/>
        <end position="165"/>
    </location>
</feature>
<feature type="binding site" evidence="1">
    <location>
        <position position="35"/>
    </location>
    <ligand>
        <name>substrate</name>
    </ligand>
</feature>
<feature type="binding site" evidence="1">
    <location>
        <position position="77"/>
    </location>
    <ligand>
        <name>substrate</name>
    </ligand>
</feature>
<feature type="binding site" evidence="1">
    <location>
        <position position="115"/>
    </location>
    <ligand>
        <name>substrate</name>
    </ligand>
</feature>
<feature type="binding site" evidence="1">
    <location>
        <position position="156"/>
    </location>
    <ligand>
        <name>substrate</name>
    </ligand>
</feature>
<evidence type="ECO:0000255" key="1">
    <source>
        <dbReference type="HAMAP-Rule" id="MF_01632"/>
    </source>
</evidence>
<protein>
    <recommendedName>
        <fullName evidence="1">Chorismate pyruvate-lyase</fullName>
        <shortName evidence="1">CL</shortName>
        <shortName evidence="1">CPL</shortName>
        <ecNumber evidence="1">4.1.3.40</ecNumber>
    </recommendedName>
</protein>
<name>UBIC_ECO81</name>
<reference key="1">
    <citation type="journal article" date="2009" name="PLoS Genet.">
        <title>Organised genome dynamics in the Escherichia coli species results in highly diverse adaptive paths.</title>
        <authorList>
            <person name="Touchon M."/>
            <person name="Hoede C."/>
            <person name="Tenaillon O."/>
            <person name="Barbe V."/>
            <person name="Baeriswyl S."/>
            <person name="Bidet P."/>
            <person name="Bingen E."/>
            <person name="Bonacorsi S."/>
            <person name="Bouchier C."/>
            <person name="Bouvet O."/>
            <person name="Calteau A."/>
            <person name="Chiapello H."/>
            <person name="Clermont O."/>
            <person name="Cruveiller S."/>
            <person name="Danchin A."/>
            <person name="Diard M."/>
            <person name="Dossat C."/>
            <person name="Karoui M.E."/>
            <person name="Frapy E."/>
            <person name="Garry L."/>
            <person name="Ghigo J.M."/>
            <person name="Gilles A.M."/>
            <person name="Johnson J."/>
            <person name="Le Bouguenec C."/>
            <person name="Lescat M."/>
            <person name="Mangenot S."/>
            <person name="Martinez-Jehanne V."/>
            <person name="Matic I."/>
            <person name="Nassif X."/>
            <person name="Oztas S."/>
            <person name="Petit M.A."/>
            <person name="Pichon C."/>
            <person name="Rouy Z."/>
            <person name="Ruf C.S."/>
            <person name="Schneider D."/>
            <person name="Tourret J."/>
            <person name="Vacherie B."/>
            <person name="Vallenet D."/>
            <person name="Medigue C."/>
            <person name="Rocha E.P.C."/>
            <person name="Denamur E."/>
        </authorList>
    </citation>
    <scope>NUCLEOTIDE SEQUENCE [LARGE SCALE GENOMIC DNA]</scope>
    <source>
        <strain>ED1a</strain>
    </source>
</reference>
<sequence length="165" mass="18808">MSHPALTQLRALRYFTEIPALEPQLLDWLLLEDSMTKRFEQQGKTVSVTMIREGFVEQNEIPEELPLLPKESRYWLREILLCADGEPWLAGRTVVPVSTLSGPELALQKLGKTPLGRYLFTSSTLTRDFIEIGRDAGLWGRRSRLRLSGKPLLLTELFLPASPLY</sequence>
<proteinExistence type="inferred from homology"/>
<keyword id="KW-0963">Cytoplasm</keyword>
<keyword id="KW-0456">Lyase</keyword>
<keyword id="KW-0670">Pyruvate</keyword>
<keyword id="KW-0831">Ubiquinone biosynthesis</keyword>
<organism>
    <name type="scientific">Escherichia coli O81 (strain ED1a)</name>
    <dbReference type="NCBI Taxonomy" id="585397"/>
    <lineage>
        <taxon>Bacteria</taxon>
        <taxon>Pseudomonadati</taxon>
        <taxon>Pseudomonadota</taxon>
        <taxon>Gammaproteobacteria</taxon>
        <taxon>Enterobacterales</taxon>
        <taxon>Enterobacteriaceae</taxon>
        <taxon>Escherichia</taxon>
    </lineage>
</organism>
<dbReference type="EC" id="4.1.3.40" evidence="1"/>
<dbReference type="EMBL" id="CU928162">
    <property type="protein sequence ID" value="CAR10715.1"/>
    <property type="molecule type" value="Genomic_DNA"/>
</dbReference>
<dbReference type="RefSeq" id="WP_000019227.1">
    <property type="nucleotide sequence ID" value="NC_011745.1"/>
</dbReference>
<dbReference type="SMR" id="B7N2P6"/>
<dbReference type="KEGG" id="ecq:ECED1_4754"/>
<dbReference type="HOGENOM" id="CLU_096824_1_0_6"/>
<dbReference type="UniPathway" id="UPA00232"/>
<dbReference type="Proteomes" id="UP000000748">
    <property type="component" value="Chromosome"/>
</dbReference>
<dbReference type="GO" id="GO:0005829">
    <property type="term" value="C:cytosol"/>
    <property type="evidence" value="ECO:0007669"/>
    <property type="project" value="TreeGrafter"/>
</dbReference>
<dbReference type="GO" id="GO:0008813">
    <property type="term" value="F:chorismate lyase activity"/>
    <property type="evidence" value="ECO:0007669"/>
    <property type="project" value="UniProtKB-UniRule"/>
</dbReference>
<dbReference type="GO" id="GO:0042866">
    <property type="term" value="P:pyruvate biosynthetic process"/>
    <property type="evidence" value="ECO:0007669"/>
    <property type="project" value="UniProtKB-UniRule"/>
</dbReference>
<dbReference type="GO" id="GO:0006744">
    <property type="term" value="P:ubiquinone biosynthetic process"/>
    <property type="evidence" value="ECO:0007669"/>
    <property type="project" value="UniProtKB-UniRule"/>
</dbReference>
<dbReference type="FunFam" id="3.40.1410.10:FF:000002">
    <property type="entry name" value="Chorismate pyruvate-lyase"/>
    <property type="match status" value="1"/>
</dbReference>
<dbReference type="Gene3D" id="3.40.1410.10">
    <property type="entry name" value="Chorismate lyase-like"/>
    <property type="match status" value="1"/>
</dbReference>
<dbReference type="HAMAP" id="MF_01632">
    <property type="entry name" value="UbiC"/>
    <property type="match status" value="1"/>
</dbReference>
<dbReference type="InterPro" id="IPR007440">
    <property type="entry name" value="Chorismate--pyruvate_lyase"/>
</dbReference>
<dbReference type="InterPro" id="IPR028978">
    <property type="entry name" value="Chorismate_lyase_/UTRA_dom_sf"/>
</dbReference>
<dbReference type="NCBIfam" id="NF008656">
    <property type="entry name" value="PRK11655.1"/>
    <property type="match status" value="1"/>
</dbReference>
<dbReference type="PANTHER" id="PTHR38683">
    <property type="entry name" value="CHORISMATE PYRUVATE-LYASE"/>
    <property type="match status" value="1"/>
</dbReference>
<dbReference type="PANTHER" id="PTHR38683:SF1">
    <property type="entry name" value="CHORISMATE PYRUVATE-LYASE"/>
    <property type="match status" value="1"/>
</dbReference>
<dbReference type="Pfam" id="PF04345">
    <property type="entry name" value="Chor_lyase"/>
    <property type="match status" value="1"/>
</dbReference>
<dbReference type="SUPFAM" id="SSF64288">
    <property type="entry name" value="Chorismate lyase-like"/>
    <property type="match status" value="1"/>
</dbReference>